<name>SEY1_PODAN</name>
<evidence type="ECO:0000255" key="1">
    <source>
        <dbReference type="HAMAP-Rule" id="MF_03109"/>
    </source>
</evidence>
<evidence type="ECO:0000255" key="2">
    <source>
        <dbReference type="PROSITE-ProRule" id="PRU01052"/>
    </source>
</evidence>
<reference key="1">
    <citation type="journal article" date="2008" name="Genome Biol.">
        <title>The genome sequence of the model ascomycete fungus Podospora anserina.</title>
        <authorList>
            <person name="Espagne E."/>
            <person name="Lespinet O."/>
            <person name="Malagnac F."/>
            <person name="Da Silva C."/>
            <person name="Jaillon O."/>
            <person name="Porcel B.M."/>
            <person name="Couloux A."/>
            <person name="Aury J.-M."/>
            <person name="Segurens B."/>
            <person name="Poulain J."/>
            <person name="Anthouard V."/>
            <person name="Grossetete S."/>
            <person name="Khalili H."/>
            <person name="Coppin E."/>
            <person name="Dequard-Chablat M."/>
            <person name="Picard M."/>
            <person name="Contamine V."/>
            <person name="Arnaise S."/>
            <person name="Bourdais A."/>
            <person name="Berteaux-Lecellier V."/>
            <person name="Gautheret D."/>
            <person name="de Vries R.P."/>
            <person name="Battaglia E."/>
            <person name="Coutinho P.M."/>
            <person name="Danchin E.G.J."/>
            <person name="Henrissat B."/>
            <person name="El Khoury R."/>
            <person name="Sainsard-Chanet A."/>
            <person name="Boivin A."/>
            <person name="Pinan-Lucarre B."/>
            <person name="Sellem C.H."/>
            <person name="Debuchy R."/>
            <person name="Wincker P."/>
            <person name="Weissenbach J."/>
            <person name="Silar P."/>
        </authorList>
    </citation>
    <scope>NUCLEOTIDE SEQUENCE [LARGE SCALE GENOMIC DNA]</scope>
    <source>
        <strain>S / ATCC MYA-4624 / DSM 980 / FGSC 10383</strain>
    </source>
</reference>
<reference key="2">
    <citation type="journal article" date="2014" name="Genetics">
        <title>Maintaining two mating types: Structure of the mating type locus and its role in heterokaryosis in Podospora anserina.</title>
        <authorList>
            <person name="Grognet P."/>
            <person name="Bidard F."/>
            <person name="Kuchly C."/>
            <person name="Tong L.C.H."/>
            <person name="Coppin E."/>
            <person name="Benkhali J.A."/>
            <person name="Couloux A."/>
            <person name="Wincker P."/>
            <person name="Debuchy R."/>
            <person name="Silar P."/>
        </authorList>
    </citation>
    <scope>GENOME REANNOTATION</scope>
    <source>
        <strain>S / ATCC MYA-4624 / DSM 980 / FGSC 10383</strain>
    </source>
</reference>
<proteinExistence type="inferred from homology"/>
<gene>
    <name evidence="1" type="primary">SEY1</name>
    <name type="ordered locus">Pa_6_3800</name>
    <name type="ORF">PODANS_6_3800</name>
</gene>
<feature type="chain" id="PRO_0000384998" description="Protein SEY1">
    <location>
        <begin position="1"/>
        <end position="852"/>
    </location>
</feature>
<feature type="topological domain" description="Cytoplasmic" evidence="1">
    <location>
        <begin position="1"/>
        <end position="738"/>
    </location>
</feature>
<feature type="transmembrane region" description="Helical" evidence="1">
    <location>
        <begin position="739"/>
        <end position="759"/>
    </location>
</feature>
<feature type="topological domain" description="Lumenal" evidence="1">
    <location>
        <begin position="760"/>
        <end position="762"/>
    </location>
</feature>
<feature type="transmembrane region" description="Helical" evidence="1">
    <location>
        <begin position="763"/>
        <end position="783"/>
    </location>
</feature>
<feature type="topological domain" description="Cytoplasmic" evidence="1">
    <location>
        <begin position="784"/>
        <end position="852"/>
    </location>
</feature>
<feature type="domain" description="GB1/RHD3-type G" evidence="2">
    <location>
        <begin position="47"/>
        <end position="294"/>
    </location>
</feature>
<feature type="coiled-coil region" evidence="1">
    <location>
        <begin position="475"/>
        <end position="500"/>
    </location>
</feature>
<feature type="binding site" evidence="1">
    <location>
        <begin position="57"/>
        <end position="64"/>
    </location>
    <ligand>
        <name>GTP</name>
        <dbReference type="ChEBI" id="CHEBI:37565"/>
    </ligand>
</feature>
<organism>
    <name type="scientific">Podospora anserina (strain S / ATCC MYA-4624 / DSM 980 / FGSC 10383)</name>
    <name type="common">Pleurage anserina</name>
    <dbReference type="NCBI Taxonomy" id="515849"/>
    <lineage>
        <taxon>Eukaryota</taxon>
        <taxon>Fungi</taxon>
        <taxon>Dikarya</taxon>
        <taxon>Ascomycota</taxon>
        <taxon>Pezizomycotina</taxon>
        <taxon>Sordariomycetes</taxon>
        <taxon>Sordariomycetidae</taxon>
        <taxon>Sordariales</taxon>
        <taxon>Podosporaceae</taxon>
        <taxon>Podospora</taxon>
        <taxon>Podospora anserina</taxon>
    </lineage>
</organism>
<comment type="function">
    <text evidence="1">Cooperates with the reticulon proteins and tubule-shaping DP1 family proteins to generate and maintain the structure of the tubular endoplasmic reticulum network. Has GTPase activity, which is required for its function in ER organization.</text>
</comment>
<comment type="subcellular location">
    <subcellularLocation>
        <location evidence="1">Endoplasmic reticulum membrane</location>
        <topology evidence="1">Multi-pass membrane protein</topology>
    </subcellularLocation>
    <text evidence="1">Enriched in the cortical ER. Concentrated in punctae along the ER tubules.</text>
</comment>
<comment type="similarity">
    <text evidence="2">Belongs to the TRAFAC class dynamin-like GTPase superfamily. GB1/RHD3 GTPase family. RHD3 subfamily.</text>
</comment>
<sequence length="852" mass="95401">MNGHFAAIGNGPTAKQYDHGIQVIDEDKSFNTNLNDYLTETHVAESGFNYHLISVFGSQSTGKSTLLNHLFGTQFSVMSETERRQTTKGIWLSKNKRDSANGSPMADNILVMDVEGTDGRERGEDQDFERKSALFALATSEVLIVNIWEHQVGLYQGANMGLLKTVFEVNLQLFLKDRQSQTRSLLFFVIRDFVGNTPLENLRTTLITDLSKIWSSISKPQGLEDSKIEDYFDFAFSALPHKIYQPEKFLAEVDRLGARFTTGHRSTKDQEFGGGVFLPEYHRRIPADGLSVYAGGVWDQIVNNKDLDLPTQQELLAQFRCDEIAREVLVGFDTVIAPLEEQQVEAIRLGKPAAVLADLGAQGAGAREKCIKAFETQASRYHKGVYTMKRGELESKIDTRLKALYQAQLTAAHKAGVAAFSEAVSGAVKAGQKAGGSYEFAEIVAKQKAKTLQIFKTEAKSLSIPGVAWSNFKPQYKLFEKELDEVSARLRKEEMRRLAIRVERWVRSRLGDAIGLEFNKLGSGRGGSVSPEGGEKPATEKDLWDRVWNAFIGIVKEAETRFAERAKSFEASPEEVEVGLWRLRRKSWVALREKIEEEVMESNILMKLRENFEDKFRYDEDGVPRIWRPTDDIEGIYTKARESTLGLVPLLSRFRLSETYAPPDLPAFIGVQPAGVEPEDEEDLLPIGGIDEEEGKSLEEETTVLGESKRQDLVVRFKKMADGVYVEAKRSAIGGITQVPLYFYVILLILGWNEILMVLRNPFLILLILVMGGGTYIAYSLNLLGPMMQMSNAAFNQAVDIGKDRLRDFLVNNETARQALAVPARQMGADISLDRLDSRGKKAQDISDDDDI</sequence>
<keyword id="KW-0175">Coiled coil</keyword>
<keyword id="KW-0256">Endoplasmic reticulum</keyword>
<keyword id="KW-0342">GTP-binding</keyword>
<keyword id="KW-0378">Hydrolase</keyword>
<keyword id="KW-0472">Membrane</keyword>
<keyword id="KW-0547">Nucleotide-binding</keyword>
<keyword id="KW-1185">Reference proteome</keyword>
<keyword id="KW-0812">Transmembrane</keyword>
<keyword id="KW-1133">Transmembrane helix</keyword>
<accession>B2B1M4</accession>
<accession>A0A090D8K9</accession>
<dbReference type="EC" id="3.6.5.-" evidence="1"/>
<dbReference type="EMBL" id="CU638744">
    <property type="protein sequence ID" value="CAP71009.1"/>
    <property type="molecule type" value="Genomic_DNA"/>
</dbReference>
<dbReference type="EMBL" id="FO904941">
    <property type="protein sequence ID" value="CDP30408.1"/>
    <property type="molecule type" value="Genomic_DNA"/>
</dbReference>
<dbReference type="RefSeq" id="XP_001909875.1">
    <property type="nucleotide sequence ID" value="XM_001909840.1"/>
</dbReference>
<dbReference type="SMR" id="B2B1M4"/>
<dbReference type="FunCoup" id="B2B1M4">
    <property type="interactions" value="61"/>
</dbReference>
<dbReference type="STRING" id="515849.B2B1M4"/>
<dbReference type="GeneID" id="6194414"/>
<dbReference type="KEGG" id="pan:PODANSg6912"/>
<dbReference type="VEuPathDB" id="FungiDB:PODANS_6_3800"/>
<dbReference type="eggNOG" id="KOG2203">
    <property type="taxonomic scope" value="Eukaryota"/>
</dbReference>
<dbReference type="HOGENOM" id="CLU_011270_0_0_1"/>
<dbReference type="InParanoid" id="B2B1M4"/>
<dbReference type="OrthoDB" id="1597724at2759"/>
<dbReference type="Proteomes" id="UP000001197">
    <property type="component" value="Chromosome 6"/>
</dbReference>
<dbReference type="GO" id="GO:0005789">
    <property type="term" value="C:endoplasmic reticulum membrane"/>
    <property type="evidence" value="ECO:0007669"/>
    <property type="project" value="UniProtKB-SubCell"/>
</dbReference>
<dbReference type="GO" id="GO:0005525">
    <property type="term" value="F:GTP binding"/>
    <property type="evidence" value="ECO:0007669"/>
    <property type="project" value="UniProtKB-UniRule"/>
</dbReference>
<dbReference type="GO" id="GO:0003924">
    <property type="term" value="F:GTPase activity"/>
    <property type="evidence" value="ECO:0007669"/>
    <property type="project" value="UniProtKB-UniRule"/>
</dbReference>
<dbReference type="GO" id="GO:0016320">
    <property type="term" value="P:endoplasmic reticulum membrane fusion"/>
    <property type="evidence" value="ECO:0007669"/>
    <property type="project" value="TreeGrafter"/>
</dbReference>
<dbReference type="CDD" id="cd01851">
    <property type="entry name" value="GBP"/>
    <property type="match status" value="1"/>
</dbReference>
<dbReference type="FunFam" id="3.40.50.300:FF:000727">
    <property type="entry name" value="Protein SEY1 homolog"/>
    <property type="match status" value="1"/>
</dbReference>
<dbReference type="Gene3D" id="3.40.50.300">
    <property type="entry name" value="P-loop containing nucleotide triphosphate hydrolases"/>
    <property type="match status" value="1"/>
</dbReference>
<dbReference type="HAMAP" id="MF_03109">
    <property type="entry name" value="Sey1"/>
    <property type="match status" value="1"/>
</dbReference>
<dbReference type="InterPro" id="IPR030386">
    <property type="entry name" value="G_GB1_RHD3_dom"/>
</dbReference>
<dbReference type="InterPro" id="IPR027417">
    <property type="entry name" value="P-loop_NTPase"/>
</dbReference>
<dbReference type="InterPro" id="IPR008803">
    <property type="entry name" value="RHD3/Sey1"/>
</dbReference>
<dbReference type="InterPro" id="IPR046758">
    <property type="entry name" value="Sey1/RHD3-like_3HB"/>
</dbReference>
<dbReference type="PANTHER" id="PTHR45923">
    <property type="entry name" value="PROTEIN SEY1"/>
    <property type="match status" value="1"/>
</dbReference>
<dbReference type="PANTHER" id="PTHR45923:SF2">
    <property type="entry name" value="PROTEIN SEY1"/>
    <property type="match status" value="1"/>
</dbReference>
<dbReference type="Pfam" id="PF05879">
    <property type="entry name" value="RHD3_GTPase"/>
    <property type="match status" value="1"/>
</dbReference>
<dbReference type="Pfam" id="PF20428">
    <property type="entry name" value="Sey1_3HB"/>
    <property type="match status" value="1"/>
</dbReference>
<dbReference type="SUPFAM" id="SSF52540">
    <property type="entry name" value="P-loop containing nucleoside triphosphate hydrolases"/>
    <property type="match status" value="1"/>
</dbReference>
<dbReference type="PROSITE" id="PS51715">
    <property type="entry name" value="G_GB1_RHD3"/>
    <property type="match status" value="1"/>
</dbReference>
<protein>
    <recommendedName>
        <fullName evidence="1">Protein SEY1</fullName>
        <ecNumber evidence="1">3.6.5.-</ecNumber>
    </recommendedName>
</protein>